<sequence>MKIIKDALAGTLESSDVMIRIGPSSEPGIRLELESLVKQQFGAAIEQVVRETLAKLGVERALVSVDDKGALECILRARVQAAALRAAEQTEIQWSAL</sequence>
<protein>
    <recommendedName>
        <fullName evidence="1">Citrate lyase acyl carrier protein 2</fullName>
    </recommendedName>
    <alternativeName>
        <fullName evidence="1">Citrate lyase gamma chain 2</fullName>
    </alternativeName>
</protein>
<gene>
    <name evidence="1" type="primary">citD2</name>
    <name type="ordered locus">STY0068</name>
    <name type="ordered locus">t0061</name>
</gene>
<name>CITD2_SALTI</name>
<feature type="chain" id="PRO_0000214708" description="Citrate lyase acyl carrier protein 2">
    <location>
        <begin position="1"/>
        <end position="97"/>
    </location>
</feature>
<feature type="modified residue" description="O-(phosphoribosyl dephospho-coenzyme A)serine" evidence="1">
    <location>
        <position position="14"/>
    </location>
</feature>
<accession>Q8XFF4</accession>
<accession>Q7ANM0</accession>
<evidence type="ECO:0000255" key="1">
    <source>
        <dbReference type="HAMAP-Rule" id="MF_00805"/>
    </source>
</evidence>
<reference key="1">
    <citation type="journal article" date="2001" name="Nature">
        <title>Complete genome sequence of a multiple drug resistant Salmonella enterica serovar Typhi CT18.</title>
        <authorList>
            <person name="Parkhill J."/>
            <person name="Dougan G."/>
            <person name="James K.D."/>
            <person name="Thomson N.R."/>
            <person name="Pickard D."/>
            <person name="Wain J."/>
            <person name="Churcher C.M."/>
            <person name="Mungall K.L."/>
            <person name="Bentley S.D."/>
            <person name="Holden M.T.G."/>
            <person name="Sebaihia M."/>
            <person name="Baker S."/>
            <person name="Basham D."/>
            <person name="Brooks K."/>
            <person name="Chillingworth T."/>
            <person name="Connerton P."/>
            <person name="Cronin A."/>
            <person name="Davis P."/>
            <person name="Davies R.M."/>
            <person name="Dowd L."/>
            <person name="White N."/>
            <person name="Farrar J."/>
            <person name="Feltwell T."/>
            <person name="Hamlin N."/>
            <person name="Haque A."/>
            <person name="Hien T.T."/>
            <person name="Holroyd S."/>
            <person name="Jagels K."/>
            <person name="Krogh A."/>
            <person name="Larsen T.S."/>
            <person name="Leather S."/>
            <person name="Moule S."/>
            <person name="O'Gaora P."/>
            <person name="Parry C."/>
            <person name="Quail M.A."/>
            <person name="Rutherford K.M."/>
            <person name="Simmonds M."/>
            <person name="Skelton J."/>
            <person name="Stevens K."/>
            <person name="Whitehead S."/>
            <person name="Barrell B.G."/>
        </authorList>
    </citation>
    <scope>NUCLEOTIDE SEQUENCE [LARGE SCALE GENOMIC DNA]</scope>
    <source>
        <strain>CT18</strain>
    </source>
</reference>
<reference key="2">
    <citation type="journal article" date="2003" name="J. Bacteriol.">
        <title>Comparative genomics of Salmonella enterica serovar Typhi strains Ty2 and CT18.</title>
        <authorList>
            <person name="Deng W."/>
            <person name="Liou S.-R."/>
            <person name="Plunkett G. III"/>
            <person name="Mayhew G.F."/>
            <person name="Rose D.J."/>
            <person name="Burland V."/>
            <person name="Kodoyianni V."/>
            <person name="Schwartz D.C."/>
            <person name="Blattner F.R."/>
        </authorList>
    </citation>
    <scope>NUCLEOTIDE SEQUENCE [LARGE SCALE GENOMIC DNA]</scope>
    <source>
        <strain>ATCC 700931 / Ty2</strain>
    </source>
</reference>
<dbReference type="EMBL" id="AL513382">
    <property type="protein sequence ID" value="CAD01214.1"/>
    <property type="molecule type" value="Genomic_DNA"/>
</dbReference>
<dbReference type="EMBL" id="AE014613">
    <property type="protein sequence ID" value="AAO67794.1"/>
    <property type="molecule type" value="Genomic_DNA"/>
</dbReference>
<dbReference type="RefSeq" id="NP_454670.1">
    <property type="nucleotide sequence ID" value="NC_003198.1"/>
</dbReference>
<dbReference type="SMR" id="Q8XFF4"/>
<dbReference type="STRING" id="220341.gene:17584116"/>
<dbReference type="KEGG" id="stt:t0061"/>
<dbReference type="KEGG" id="sty:STY0068"/>
<dbReference type="PATRIC" id="fig|220341.7.peg.68"/>
<dbReference type="eggNOG" id="COG3052">
    <property type="taxonomic scope" value="Bacteria"/>
</dbReference>
<dbReference type="HOGENOM" id="CLU_158489_0_0_6"/>
<dbReference type="OMA" id="DENINWE"/>
<dbReference type="OrthoDB" id="9798736at2"/>
<dbReference type="Proteomes" id="UP000000541">
    <property type="component" value="Chromosome"/>
</dbReference>
<dbReference type="Proteomes" id="UP000002670">
    <property type="component" value="Chromosome"/>
</dbReference>
<dbReference type="GO" id="GO:0005737">
    <property type="term" value="C:cytoplasm"/>
    <property type="evidence" value="ECO:0007669"/>
    <property type="project" value="UniProtKB-SubCell"/>
</dbReference>
<dbReference type="HAMAP" id="MF_00805">
    <property type="entry name" value="CitD"/>
    <property type="match status" value="1"/>
</dbReference>
<dbReference type="InterPro" id="IPR006495">
    <property type="entry name" value="CitD"/>
</dbReference>
<dbReference type="InterPro" id="IPR023439">
    <property type="entry name" value="Mal_deCO2ase/Cit_lyase_ACP"/>
</dbReference>
<dbReference type="NCBIfam" id="TIGR01608">
    <property type="entry name" value="citD"/>
    <property type="match status" value="1"/>
</dbReference>
<dbReference type="NCBIfam" id="NF009726">
    <property type="entry name" value="PRK13253.1"/>
    <property type="match status" value="1"/>
</dbReference>
<dbReference type="Pfam" id="PF06857">
    <property type="entry name" value="ACP"/>
    <property type="match status" value="1"/>
</dbReference>
<dbReference type="PIRSF" id="PIRSF002736">
    <property type="entry name" value="Citrt_lyas_gamma"/>
    <property type="match status" value="1"/>
</dbReference>
<proteinExistence type="inferred from homology"/>
<keyword id="KW-0963">Cytoplasm</keyword>
<keyword id="KW-0597">Phosphoprotein</keyword>
<comment type="function">
    <text evidence="1">Covalent carrier of the coenzyme of citrate lyase.</text>
</comment>
<comment type="subunit">
    <text evidence="1">Oligomer with a subunit composition of (alpha,beta,gamma)6.</text>
</comment>
<comment type="subcellular location">
    <subcellularLocation>
        <location evidence="1">Cytoplasm</location>
    </subcellularLocation>
</comment>
<comment type="similarity">
    <text evidence="1">Belongs to the CitD family.</text>
</comment>
<organism>
    <name type="scientific">Salmonella typhi</name>
    <dbReference type="NCBI Taxonomy" id="90370"/>
    <lineage>
        <taxon>Bacteria</taxon>
        <taxon>Pseudomonadati</taxon>
        <taxon>Pseudomonadota</taxon>
        <taxon>Gammaproteobacteria</taxon>
        <taxon>Enterobacterales</taxon>
        <taxon>Enterobacteriaceae</taxon>
        <taxon>Salmonella</taxon>
    </lineage>
</organism>